<dbReference type="EC" id="5.3.1.23" evidence="1 2 3"/>
<dbReference type="EMBL" id="CP000230">
    <property type="protein sequence ID" value="ABC21165.1"/>
    <property type="molecule type" value="Genomic_DNA"/>
</dbReference>
<dbReference type="RefSeq" id="WP_011388113.1">
    <property type="nucleotide sequence ID" value="NC_007643.1"/>
</dbReference>
<dbReference type="RefSeq" id="YP_425452.1">
    <property type="nucleotide sequence ID" value="NC_007643.1"/>
</dbReference>
<dbReference type="SMR" id="Q2RXI0"/>
<dbReference type="STRING" id="269796.Rru_A0360"/>
<dbReference type="EnsemblBacteria" id="ABC21165">
    <property type="protein sequence ID" value="ABC21165"/>
    <property type="gene ID" value="Rru_A0360"/>
</dbReference>
<dbReference type="KEGG" id="rru:Rru_A0360"/>
<dbReference type="PATRIC" id="fig|269796.9.peg.416"/>
<dbReference type="eggNOG" id="COG0182">
    <property type="taxonomic scope" value="Bacteria"/>
</dbReference>
<dbReference type="HOGENOM" id="CLU_016218_1_2_5"/>
<dbReference type="PhylomeDB" id="Q2RXI0"/>
<dbReference type="BioCyc" id="MetaCyc:MONOMER-17870"/>
<dbReference type="UniPathway" id="UPA00904">
    <property type="reaction ID" value="UER00874"/>
</dbReference>
<dbReference type="Proteomes" id="UP000001929">
    <property type="component" value="Chromosome"/>
</dbReference>
<dbReference type="GO" id="GO:0046523">
    <property type="term" value="F:S-methyl-5-thioribose-1-phosphate isomerase activity"/>
    <property type="evidence" value="ECO:0007669"/>
    <property type="project" value="UniProtKB-UniRule"/>
</dbReference>
<dbReference type="GO" id="GO:0019509">
    <property type="term" value="P:L-methionine salvage from methylthioadenosine"/>
    <property type="evidence" value="ECO:0007669"/>
    <property type="project" value="UniProtKB-UniRule"/>
</dbReference>
<dbReference type="FunFam" id="3.40.50.10470:FF:000006">
    <property type="entry name" value="Methylthioribose-1-phosphate isomerase"/>
    <property type="match status" value="1"/>
</dbReference>
<dbReference type="Gene3D" id="1.20.120.420">
    <property type="entry name" value="translation initiation factor eif-2b, domain 1"/>
    <property type="match status" value="1"/>
</dbReference>
<dbReference type="Gene3D" id="3.40.50.10470">
    <property type="entry name" value="Translation initiation factor eif-2b, domain 2"/>
    <property type="match status" value="1"/>
</dbReference>
<dbReference type="HAMAP" id="MF_01678">
    <property type="entry name" value="Salvage_MtnA"/>
    <property type="match status" value="1"/>
</dbReference>
<dbReference type="InterPro" id="IPR000649">
    <property type="entry name" value="IF-2B-related"/>
</dbReference>
<dbReference type="InterPro" id="IPR005251">
    <property type="entry name" value="IF-M1Pi"/>
</dbReference>
<dbReference type="InterPro" id="IPR042529">
    <property type="entry name" value="IF_2B-like_C"/>
</dbReference>
<dbReference type="InterPro" id="IPR011559">
    <property type="entry name" value="Initiation_fac_2B_a/b/d"/>
</dbReference>
<dbReference type="InterPro" id="IPR027363">
    <property type="entry name" value="M1Pi_N"/>
</dbReference>
<dbReference type="InterPro" id="IPR037171">
    <property type="entry name" value="NagB/RpiA_transferase-like"/>
</dbReference>
<dbReference type="NCBIfam" id="TIGR00524">
    <property type="entry name" value="eIF-2B_rel"/>
    <property type="match status" value="1"/>
</dbReference>
<dbReference type="NCBIfam" id="NF004326">
    <property type="entry name" value="PRK05720.1"/>
    <property type="match status" value="1"/>
</dbReference>
<dbReference type="NCBIfam" id="TIGR00512">
    <property type="entry name" value="salvage_mtnA"/>
    <property type="match status" value="1"/>
</dbReference>
<dbReference type="PANTHER" id="PTHR43475">
    <property type="entry name" value="METHYLTHIORIBOSE-1-PHOSPHATE ISOMERASE"/>
    <property type="match status" value="1"/>
</dbReference>
<dbReference type="PANTHER" id="PTHR43475:SF1">
    <property type="entry name" value="METHYLTHIORIBOSE-1-PHOSPHATE ISOMERASE"/>
    <property type="match status" value="1"/>
</dbReference>
<dbReference type="Pfam" id="PF01008">
    <property type="entry name" value="IF-2B"/>
    <property type="match status" value="1"/>
</dbReference>
<dbReference type="SUPFAM" id="SSF100950">
    <property type="entry name" value="NagB/RpiA/CoA transferase-like"/>
    <property type="match status" value="1"/>
</dbReference>
<accession>Q2RXI0</accession>
<name>MTNA_RHORT</name>
<keyword id="KW-0028">Amino-acid biosynthesis</keyword>
<keyword id="KW-0413">Isomerase</keyword>
<keyword id="KW-0486">Methionine biosynthesis</keyword>
<keyword id="KW-1185">Reference proteome</keyword>
<organism>
    <name type="scientific">Rhodospirillum rubrum (strain ATCC 11170 / ATH 1.1.1 / DSM 467 / LMG 4362 / NCIMB 8255 / S1)</name>
    <dbReference type="NCBI Taxonomy" id="269796"/>
    <lineage>
        <taxon>Bacteria</taxon>
        <taxon>Pseudomonadati</taxon>
        <taxon>Pseudomonadota</taxon>
        <taxon>Alphaproteobacteria</taxon>
        <taxon>Rhodospirillales</taxon>
        <taxon>Rhodospirillaceae</taxon>
        <taxon>Rhodospirillum</taxon>
    </lineage>
</organism>
<protein>
    <recommendedName>
        <fullName evidence="1">Methylthioribose-1-phosphate isomerase</fullName>
        <shortName evidence="1">M1Pi</shortName>
        <shortName evidence="1 4">MTR-1-P isomerase</shortName>
        <ecNumber evidence="1 2 3">5.3.1.23</ecNumber>
    </recommendedName>
    <alternativeName>
        <fullName evidence="1">S-methyl-5-thioribose-1-phosphate isomerase</fullName>
    </alternativeName>
</protein>
<evidence type="ECO:0000255" key="1">
    <source>
        <dbReference type="HAMAP-Rule" id="MF_01678"/>
    </source>
</evidence>
<evidence type="ECO:0000269" key="2">
    <source>
    </source>
</evidence>
<evidence type="ECO:0000269" key="3">
    <source>
    </source>
</evidence>
<evidence type="ECO:0000303" key="4">
    <source>
    </source>
</evidence>
<evidence type="ECO:0000303" key="5">
    <source>
    </source>
</evidence>
<evidence type="ECO:0000312" key="6">
    <source>
        <dbReference type="EMBL" id="ABC21165.1"/>
    </source>
</evidence>
<sequence length="390" mass="40656">MNVKGTPTRTIWPAREGGAVWIIDQTRLPHEFVTQRLNDLGAVAHAIRAMLVRGAPLIGATAAYGVALGMAEDPSDEGLTRACQTLLATRPTAVNLRWAIEAMAESLAAVPPDQRAQAAWAKAGAICDEDVALNEAIGDHGLGIIKDLARTKGVEKGGEGPINILTHCNAGWLATVDWGTALAPLYKAHDAGLPIHVWVDETRPRNQGASLTAWELNSHGVPHTVIADNTGGHLMQHGLVDMVIVGTDRTTATGDVCNKIGTYLKALAAFDNAVPFYVALPGPTIDWTVNDGLREIPIEQRDAAEVTRVWGRTAAGALEWVTITPTGSPAANYAFDVTPARLITGLITERGVCAASAAGLAGLYPERAPAPVPAGSAAGKGAAATADGAL</sequence>
<gene>
    <name evidence="1 5" type="primary">mtnA</name>
    <name evidence="6" type="ordered locus">Rru_A0360</name>
</gene>
<feature type="chain" id="PRO_0000445437" description="Methylthioribose-1-phosphate isomerase">
    <location>
        <begin position="1"/>
        <end position="390"/>
    </location>
</feature>
<feature type="active site" description="Proton donor" evidence="1">
    <location>
        <position position="248"/>
    </location>
</feature>
<feature type="binding site" evidence="1">
    <location>
        <begin position="53"/>
        <end position="55"/>
    </location>
    <ligand>
        <name>substrate</name>
    </ligand>
</feature>
<feature type="binding site" evidence="1">
    <location>
        <position position="90"/>
    </location>
    <ligand>
        <name>substrate</name>
    </ligand>
</feature>
<feature type="binding site" evidence="1">
    <location>
        <position position="207"/>
    </location>
    <ligand>
        <name>substrate</name>
    </ligand>
</feature>
<feature type="binding site" evidence="1">
    <location>
        <begin position="258"/>
        <end position="259"/>
    </location>
    <ligand>
        <name>substrate</name>
    </ligand>
</feature>
<feature type="site" description="Transition state stabilizer" evidence="1">
    <location>
        <position position="168"/>
    </location>
</feature>
<comment type="function">
    <text evidence="2 3">Catalyzes the interconversion of methylthioribose-1-phosphate (MTR-1-P) into methylthioribulose-1-phosphate (MTRu-1-P) (PubMed:23042035, PubMed:31950558). Also catalyzes the interconversion of 5-deoxyribose 1-phosphate and 5-deoxyribulose 1-phosphate (PubMed:23042035, PubMed:31950558). Part of a bifunctional DHAP-shunt salvage pathway for SAM by-products (PubMed:31950558).</text>
</comment>
<comment type="catalytic activity">
    <reaction evidence="1 2 3">
        <text>5-(methylsulfanyl)-alpha-D-ribose 1-phosphate = 5-(methylsulfanyl)-D-ribulose 1-phosphate</text>
        <dbReference type="Rhea" id="RHEA:19989"/>
        <dbReference type="ChEBI" id="CHEBI:58533"/>
        <dbReference type="ChEBI" id="CHEBI:58548"/>
        <dbReference type="EC" id="5.3.1.23"/>
    </reaction>
    <physiologicalReaction direction="left-to-right" evidence="3">
        <dbReference type="Rhea" id="RHEA:19990"/>
    </physiologicalReaction>
</comment>
<comment type="catalytic activity">
    <reaction evidence="2 3">
        <text>5-deoxy-alpha-D-ribose 1-phosphate = 5-deoxy-D-ribulose 1-phosphate</text>
        <dbReference type="Rhea" id="RHEA:61296"/>
        <dbReference type="ChEBI" id="CHEBI:58749"/>
        <dbReference type="ChEBI" id="CHEBI:144504"/>
    </reaction>
    <physiologicalReaction direction="left-to-right" evidence="3">
        <dbReference type="Rhea" id="RHEA:61297"/>
    </physiologicalReaction>
</comment>
<comment type="biophysicochemical properties">
    <kinetics>
        <KM evidence="2">134 uM for methylthioribose-1-phosphate</KM>
        <KM evidence="2">171 uM for deoxyribose-1-phosphate</KM>
        <text evidence="2 3">kcat is 0.1 sec(-1) with methylthioribose-1-phosphate as substrate. kcat is 0.18 sec(-1) with deoxyribose-1-phosphate as substrate (PubMed:23042035). kcat is 0.03 sec(-1) with ribose-1-phosphate as substrate (PubMed:31950558).</text>
    </kinetics>
</comment>
<comment type="pathway">
    <text evidence="1">Amino-acid biosynthesis; L-methionine biosynthesis via salvage pathway; L-methionine from S-methyl-5-thio-alpha-D-ribose 1-phosphate: step 1/6.</text>
</comment>
<comment type="disruption phenotype">
    <text evidence="2 3">Mutant cannot release methanethiol upon 5'-methylthioadenosine (MTA) feeding (PubMed:23042035). Deletion mutant accumulates both S-methyl-5'-thioadenosine and 5'-deoxyadenosine extracellularly (PubMed:31950558).</text>
</comment>
<comment type="similarity">
    <text evidence="1">Belongs to the EIF-2B alpha/beta/delta subunits family. MtnA subfamily.</text>
</comment>
<reference key="1">
    <citation type="journal article" date="2011" name="Stand. Genomic Sci.">
        <title>Complete genome sequence of Rhodospirillum rubrum type strain (S1).</title>
        <authorList>
            <person name="Munk A.C."/>
            <person name="Copeland A."/>
            <person name="Lucas S."/>
            <person name="Lapidus A."/>
            <person name="Del Rio T.G."/>
            <person name="Barry K."/>
            <person name="Detter J.C."/>
            <person name="Hammon N."/>
            <person name="Israni S."/>
            <person name="Pitluck S."/>
            <person name="Brettin T."/>
            <person name="Bruce D."/>
            <person name="Han C."/>
            <person name="Tapia R."/>
            <person name="Gilna P."/>
            <person name="Schmutz J."/>
            <person name="Larimer F."/>
            <person name="Land M."/>
            <person name="Kyrpides N.C."/>
            <person name="Mavromatis K."/>
            <person name="Richardson P."/>
            <person name="Rohde M."/>
            <person name="Goeker M."/>
            <person name="Klenk H.P."/>
            <person name="Zhang Y."/>
            <person name="Roberts G.P."/>
            <person name="Reslewic S."/>
            <person name="Schwartz D.C."/>
        </authorList>
    </citation>
    <scope>NUCLEOTIDE SEQUENCE [LARGE SCALE GENOMIC DNA]</scope>
    <source>
        <strain>ATCC 11170 / ATH 1.1.1 / DSM 467 / LMG 4362 / NCIMB 8255 / S1</strain>
    </source>
</reference>
<reference key="2">
    <citation type="journal article" date="2012" name="Nat. Chem. Biol.">
        <title>A RubisCO-like protein links SAM metabolism with isoprenoid biosynthesis.</title>
        <authorList>
            <person name="Erb T.J."/>
            <person name="Evans B.S."/>
            <person name="Cho K."/>
            <person name="Warlick B.P."/>
            <person name="Sriram J."/>
            <person name="Wood B.M."/>
            <person name="Imker H.J."/>
            <person name="Sweedler J.V."/>
            <person name="Tabita F.R."/>
            <person name="Gerlt J.A."/>
        </authorList>
    </citation>
    <scope>FUNCTION</scope>
    <scope>CATALYTIC ACTIVITY</scope>
    <scope>BIOPHYSICOCHEMICAL PROPERTIES</scope>
    <scope>DISRUPTION PHENOTYPE</scope>
    <source>
        <strain>ATCC 11170 / ATH 1.1.1 / DSM 467 / LMG 4362 / NCIMB 8255 / S1</strain>
    </source>
</reference>
<reference key="3">
    <citation type="journal article" date="2020" name="Mol. Microbiol.">
        <title>A bifunctional salvage pathway for two distinct S-adenosylmethionine by-products that is widespread in bacteria, including pathogenic Escherichia coli.</title>
        <authorList>
            <person name="North J.A."/>
            <person name="Wildenthal J.A."/>
            <person name="Erb T.J."/>
            <person name="Evans B.S."/>
            <person name="Byerly K.M."/>
            <person name="Gerlt J.A."/>
            <person name="Tabita F.R."/>
        </authorList>
    </citation>
    <scope>FUNCTION</scope>
    <scope>CATALYTIC ACTIVITY</scope>
    <scope>BIOPHYSICOCHEMICAL PROPERTIES</scope>
    <scope>DISRUPTION PHENOTYPE</scope>
</reference>
<proteinExistence type="evidence at protein level"/>